<keyword id="KW-0963">Cytoplasm</keyword>
<keyword id="KW-0217">Developmental protein</keyword>
<keyword id="KW-0238">DNA-binding</keyword>
<keyword id="KW-0371">Homeobox</keyword>
<keyword id="KW-1017">Isopeptide bond</keyword>
<keyword id="KW-0539">Nucleus</keyword>
<keyword id="KW-0597">Phosphoprotein</keyword>
<keyword id="KW-1185">Reference proteome</keyword>
<keyword id="KW-0804">Transcription</keyword>
<keyword id="KW-0805">Transcription regulation</keyword>
<keyword id="KW-0832">Ubl conjugation</keyword>
<name>PO5F1_PIG</name>
<proteinExistence type="evidence at protein level"/>
<gene>
    <name type="primary">POU5F1</name>
    <name type="synonym">OCT3</name>
    <name type="synonym">OCT4</name>
</gene>
<sequence length="360" mass="38342">MAGHLASDFAFSPPPGGGGDGPGGPEPGWVDPRTWLSFQGPPGGSGIGPGVGPGAEVWGLPACPPPYDFCGGMAYCAPQVGVGLVPQGGLETPQPEGEAGAGVESNSEGASPEPCAAPAGAAKLDKEKLEPNPEESQDIKALQKDLEQFAKLLKQKRITLGYTQADVGLTLGVLFGKVFSQTTICRFEALQLSFKNMCKLRPLLQKWVEEADNNENLQEICKAETLVQARKRKRTSIENRVRGNLESMFLQCPKPTLQQISHIAQQLGLEKDVVRVWFCNRRQKGKRSSSDYSQREDFEAAGSPFPGGPVSFPLAPGPHFGTPGYGGPHFTTLYSSVPFPEGEAFPSVSVTPLGSPMHSN</sequence>
<comment type="function">
    <text evidence="2 6">Transcription factor that binds to the octamer motif (5'-ATTTGCAT-3'). Forms a trimeric complex with SOX2 or SOX15 on DNA and controls the expression of a number of genes involved in embryonic development such as YES1, FGF4, UTF1 and ZFP206. Critical for early embryogenesis and for embryonic stem cell pluripotency.</text>
</comment>
<comment type="subunit">
    <text evidence="1 2">Interacts with PKM. Interacts with WWP2. Interacts with UBE2I and ZSCAN10. Interacts with PCGF1. Interacts with ESRRB; recruits ESRRB near the POU5F1-SOX2 element in the NANOG proximal promoter; the interaction is DNA independent. Interacts with ZNF322. Interacts with MAPK8 and MAPK9; the interaction allows MAPK8 and MAPK9 to phosphorylate POU5F1 on Ser-355. Interacts (when phosphorylated on Ser-355) with FBXW8. Interacts with FBXW4. Interacts with SOX2 and SOX15; binds synergistically with either SOX2 or SOX15 to DNA (By similarity). Interacts with DDX56 (By similarity).</text>
</comment>
<comment type="subcellular location">
    <subcellularLocation>
        <location>Cytoplasm</location>
    </subcellularLocation>
    <subcellularLocation>
        <location>Nucleus</location>
    </subcellularLocation>
    <text evidence="1 2">Expressed in a diffuse and slightly punctuate pattern. Colocalizes with MAPK8 and MAPK9 in the nucleus.</text>
</comment>
<comment type="domain">
    <text evidence="2">The POU-specific domain mediates interaction with PKM.</text>
</comment>
<comment type="domain">
    <text evidence="2">The 9aaTAD motif is a transactivation domain present in a large number of yeast and animal transcription factors.</text>
</comment>
<comment type="PTM">
    <text evidence="1">Sumoylation enhances the protein stability, DNA binding and transactivation activity. Sumoylation is required for enhanced YES1 expression (By similarity).</text>
</comment>
<comment type="PTM">
    <text evidence="1">Ubiquitinated; undergoes 'Lys-63'-linked polyubiquitination by WWP2 leading to proteasomal degradation.</text>
</comment>
<comment type="PTM">
    <text evidence="2">ERK1/2-mediated phosphorylation at Ser-111 promotes nuclear exclusion and proteasomal degradation. Phosphorylation at Thr-235 and Ser-236 decrease DNA-binding and alters ability to activate transcription.</text>
</comment>
<comment type="biotechnology">
    <text evidence="6">POU5F1/OCT4, SOX2, MYC/c-Myc and KLF4 are the four Yamanaka factors. When combined, these factors are sufficient to reprogram differentiated cells to an embryonic-like state designated iPS (induced pluripotent stem) cells. iPS cells exhibit the morphology and growth properties of ES cells and express ES cell marker genes.</text>
</comment>
<comment type="similarity">
    <text evidence="7">Belongs to the POU transcription factor family. Class-5 subfamily.</text>
</comment>
<reference key="1">
    <citation type="journal article" date="2001" name="Tissue Antigens">
        <title>Sequence of the swine major histocompatibility complex region containing all non-classical class I genes.</title>
        <authorList>
            <person name="Chardon P."/>
            <person name="Rogel-Gaillard C."/>
            <person name="Cattolico L."/>
            <person name="Duprat S."/>
            <person name="Vaiman M."/>
            <person name="Renard C."/>
        </authorList>
    </citation>
    <scope>NUCLEOTIDE SEQUENCE [LARGE SCALE GENOMIC DNA]</scope>
    <source>
        <strain>Large white</strain>
        <tissue>Fibroblast</tissue>
    </source>
</reference>
<reference key="2">
    <citation type="journal article" date="2009" name="Cell Cycle">
        <title>Induced pluripotent stem cells from swine (Sus scrofa): why they may prove to be important.</title>
        <authorList>
            <person name="Roberts R.M."/>
            <person name="Telugu B.P."/>
            <person name="Ezashi T."/>
        </authorList>
    </citation>
    <scope>BIOTECHNOLOGY</scope>
    <scope>FUNCTION</scope>
</reference>
<dbReference type="EMBL" id="AJ251914">
    <property type="protein sequence ID" value="CAB63862.1"/>
    <property type="molecule type" value="Genomic_DNA"/>
</dbReference>
<dbReference type="RefSeq" id="NP_001106531.1">
    <property type="nucleotide sequence ID" value="NM_001113060.1"/>
</dbReference>
<dbReference type="SMR" id="Q9TSV5"/>
<dbReference type="FunCoup" id="Q9TSV5">
    <property type="interactions" value="203"/>
</dbReference>
<dbReference type="STRING" id="9823.ENSSSCP00000001474"/>
<dbReference type="PaxDb" id="9823-ENSSSCP00000001474"/>
<dbReference type="Ensembl" id="ENSSSCT00015062014.1">
    <property type="protein sequence ID" value="ENSSSCP00015024895.1"/>
    <property type="gene ID" value="ENSSSCG00015046092.1"/>
</dbReference>
<dbReference type="Ensembl" id="ENSSSCT00025108244.1">
    <property type="protein sequence ID" value="ENSSSCP00025048995.1"/>
    <property type="gene ID" value="ENSSSCG00025077765.1"/>
</dbReference>
<dbReference type="Ensembl" id="ENSSSCT00030095752.1">
    <property type="protein sequence ID" value="ENSSSCP00030044105.1"/>
    <property type="gene ID" value="ENSSSCG00030068457.1"/>
</dbReference>
<dbReference type="Ensembl" id="ENSSSCT00035034185.1">
    <property type="protein sequence ID" value="ENSSSCP00035013523.1"/>
    <property type="gene ID" value="ENSSSCG00035025921.1"/>
</dbReference>
<dbReference type="Ensembl" id="ENSSSCT00040103222.1">
    <property type="protein sequence ID" value="ENSSSCP00040046730.1"/>
    <property type="gene ID" value="ENSSSCG00040074631.1"/>
</dbReference>
<dbReference type="Ensembl" id="ENSSSCT00045067635.1">
    <property type="protein sequence ID" value="ENSSSCP00045048058.1"/>
    <property type="gene ID" value="ENSSSCG00045038915.1"/>
</dbReference>
<dbReference type="Ensembl" id="ENSSSCT00050007076.1">
    <property type="protein sequence ID" value="ENSSSCP00050003046.1"/>
    <property type="gene ID" value="ENSSSCG00050005168.1"/>
</dbReference>
<dbReference type="Ensembl" id="ENSSSCT00055060100.1">
    <property type="protein sequence ID" value="ENSSSCP00055048158.1"/>
    <property type="gene ID" value="ENSSSCG00055030204.1"/>
</dbReference>
<dbReference type="Ensembl" id="ENSSSCT00060050970.1">
    <property type="protein sequence ID" value="ENSSSCP00060021742.1"/>
    <property type="gene ID" value="ENSSSCG00060037650.1"/>
</dbReference>
<dbReference type="Ensembl" id="ENSSSCT00065024219.1">
    <property type="protein sequence ID" value="ENSSSCP00065009893.1"/>
    <property type="gene ID" value="ENSSSCG00065018209.1"/>
</dbReference>
<dbReference type="Ensembl" id="ENSSSCT00070048504.1">
    <property type="protein sequence ID" value="ENSSSCP00070040957.1"/>
    <property type="gene ID" value="ENSSSCG00070024285.1"/>
</dbReference>
<dbReference type="Ensembl" id="ENSSSCT00085020488">
    <property type="protein sequence ID" value="ENSSSCP00085014013"/>
    <property type="gene ID" value="ENSSSCG00085011017"/>
</dbReference>
<dbReference type="Ensembl" id="ENSSSCT00090029304">
    <property type="protein sequence ID" value="ENSSSCP00090018138"/>
    <property type="gene ID" value="ENSSSCG00090016634"/>
</dbReference>
<dbReference type="Ensembl" id="ENSSSCT00105042427">
    <property type="protein sequence ID" value="ENSSSCP00105029523"/>
    <property type="gene ID" value="ENSSSCG00105022256"/>
</dbReference>
<dbReference type="Ensembl" id="ENSSSCT00110041435">
    <property type="protein sequence ID" value="ENSSSCP00110029016"/>
    <property type="gene ID" value="ENSSSCG00110021415"/>
</dbReference>
<dbReference type="Ensembl" id="ENSSSCT00115021620">
    <property type="protein sequence ID" value="ENSSSCP00115020468"/>
    <property type="gene ID" value="ENSSSCG00115012524"/>
</dbReference>
<dbReference type="Ensembl" id="ENSSSCT00130039460">
    <property type="protein sequence ID" value="ENSSSCP00130027799"/>
    <property type="gene ID" value="ENSSSCG00130020343"/>
</dbReference>
<dbReference type="GeneID" id="100127461"/>
<dbReference type="KEGG" id="ssc:100127461"/>
<dbReference type="CTD" id="5460"/>
<dbReference type="eggNOG" id="KOG3802">
    <property type="taxonomic scope" value="Eukaryota"/>
</dbReference>
<dbReference type="HOGENOM" id="CLU_066243_0_0_1"/>
<dbReference type="InParanoid" id="Q9TSV5"/>
<dbReference type="OrthoDB" id="6358449at2759"/>
<dbReference type="TreeFam" id="TF316413"/>
<dbReference type="Proteomes" id="UP000008227">
    <property type="component" value="Unplaced"/>
</dbReference>
<dbReference type="Proteomes" id="UP000314985">
    <property type="component" value="Chromosome 7"/>
</dbReference>
<dbReference type="Proteomes" id="UP000694570">
    <property type="component" value="Unplaced"/>
</dbReference>
<dbReference type="Proteomes" id="UP000694571">
    <property type="component" value="Unplaced"/>
</dbReference>
<dbReference type="Proteomes" id="UP000694720">
    <property type="component" value="Unplaced"/>
</dbReference>
<dbReference type="Proteomes" id="UP000694722">
    <property type="component" value="Unplaced"/>
</dbReference>
<dbReference type="Proteomes" id="UP000694723">
    <property type="component" value="Unplaced"/>
</dbReference>
<dbReference type="Proteomes" id="UP000694724">
    <property type="component" value="Unplaced"/>
</dbReference>
<dbReference type="Proteomes" id="UP000694725">
    <property type="component" value="Unplaced"/>
</dbReference>
<dbReference type="Proteomes" id="UP000694726">
    <property type="component" value="Unplaced"/>
</dbReference>
<dbReference type="Proteomes" id="UP000694727">
    <property type="component" value="Unplaced"/>
</dbReference>
<dbReference type="Proteomes" id="UP000694728">
    <property type="component" value="Unplaced"/>
</dbReference>
<dbReference type="GO" id="GO:0000785">
    <property type="term" value="C:chromatin"/>
    <property type="evidence" value="ECO:0000250"/>
    <property type="project" value="AgBase"/>
</dbReference>
<dbReference type="GO" id="GO:0005737">
    <property type="term" value="C:cytoplasm"/>
    <property type="evidence" value="ECO:0007669"/>
    <property type="project" value="UniProtKB-SubCell"/>
</dbReference>
<dbReference type="GO" id="GO:0005634">
    <property type="term" value="C:nucleus"/>
    <property type="evidence" value="ECO:0007669"/>
    <property type="project" value="UniProtKB-SubCell"/>
</dbReference>
<dbReference type="GO" id="GO:0000987">
    <property type="term" value="F:cis-regulatory region sequence-specific DNA binding"/>
    <property type="evidence" value="ECO:0000250"/>
    <property type="project" value="AgBase"/>
</dbReference>
<dbReference type="GO" id="GO:0019955">
    <property type="term" value="F:cytokine binding"/>
    <property type="evidence" value="ECO:0000250"/>
    <property type="project" value="AgBase"/>
</dbReference>
<dbReference type="GO" id="GO:0000981">
    <property type="term" value="F:DNA-binding transcription factor activity, RNA polymerase II-specific"/>
    <property type="evidence" value="ECO:0000318"/>
    <property type="project" value="GO_Central"/>
</dbReference>
<dbReference type="GO" id="GO:0000978">
    <property type="term" value="F:RNA polymerase II cis-regulatory region sequence-specific DNA binding"/>
    <property type="evidence" value="ECO:0000318"/>
    <property type="project" value="GO_Central"/>
</dbReference>
<dbReference type="GO" id="GO:0010629">
    <property type="term" value="P:negative regulation of gene expression"/>
    <property type="evidence" value="ECO:0000250"/>
    <property type="project" value="AgBase"/>
</dbReference>
<dbReference type="GO" id="GO:0010628">
    <property type="term" value="P:positive regulation of gene expression"/>
    <property type="evidence" value="ECO:0000250"/>
    <property type="project" value="AgBase"/>
</dbReference>
<dbReference type="GO" id="GO:0006357">
    <property type="term" value="P:regulation of transcription by RNA polymerase II"/>
    <property type="evidence" value="ECO:0000318"/>
    <property type="project" value="GO_Central"/>
</dbReference>
<dbReference type="CDD" id="cd00086">
    <property type="entry name" value="homeodomain"/>
    <property type="match status" value="1"/>
</dbReference>
<dbReference type="FunFam" id="1.10.10.60:FF:000161">
    <property type="entry name" value="POU domain protein"/>
    <property type="match status" value="1"/>
</dbReference>
<dbReference type="FunFam" id="1.10.260.40:FF:000022">
    <property type="entry name" value="POU domain protein"/>
    <property type="match status" value="1"/>
</dbReference>
<dbReference type="Gene3D" id="1.10.10.60">
    <property type="entry name" value="Homeodomain-like"/>
    <property type="match status" value="1"/>
</dbReference>
<dbReference type="Gene3D" id="1.10.260.40">
    <property type="entry name" value="lambda repressor-like DNA-binding domains"/>
    <property type="match status" value="1"/>
</dbReference>
<dbReference type="InterPro" id="IPR001356">
    <property type="entry name" value="HD"/>
</dbReference>
<dbReference type="InterPro" id="IPR017970">
    <property type="entry name" value="Homeobox_CS"/>
</dbReference>
<dbReference type="InterPro" id="IPR009057">
    <property type="entry name" value="Homeodomain-like_sf"/>
</dbReference>
<dbReference type="InterPro" id="IPR010982">
    <property type="entry name" value="Lambda_DNA-bd_dom_sf"/>
</dbReference>
<dbReference type="InterPro" id="IPR013847">
    <property type="entry name" value="POU"/>
</dbReference>
<dbReference type="InterPro" id="IPR000327">
    <property type="entry name" value="POU_dom"/>
</dbReference>
<dbReference type="InterPro" id="IPR050255">
    <property type="entry name" value="POU_domain_TF"/>
</dbReference>
<dbReference type="PANTHER" id="PTHR11636">
    <property type="entry name" value="POU DOMAIN"/>
    <property type="match status" value="1"/>
</dbReference>
<dbReference type="PANTHER" id="PTHR11636:SF86">
    <property type="entry name" value="POU DOMAIN, CLASS 5, TRANSCRIPTION FACTOR 1-RELATED"/>
    <property type="match status" value="1"/>
</dbReference>
<dbReference type="Pfam" id="PF00046">
    <property type="entry name" value="Homeodomain"/>
    <property type="match status" value="1"/>
</dbReference>
<dbReference type="Pfam" id="PF00157">
    <property type="entry name" value="Pou"/>
    <property type="match status" value="1"/>
</dbReference>
<dbReference type="PRINTS" id="PR00028">
    <property type="entry name" value="POUDOMAIN"/>
</dbReference>
<dbReference type="SMART" id="SM00389">
    <property type="entry name" value="HOX"/>
    <property type="match status" value="1"/>
</dbReference>
<dbReference type="SMART" id="SM00352">
    <property type="entry name" value="POU"/>
    <property type="match status" value="1"/>
</dbReference>
<dbReference type="SUPFAM" id="SSF46689">
    <property type="entry name" value="Homeodomain-like"/>
    <property type="match status" value="1"/>
</dbReference>
<dbReference type="SUPFAM" id="SSF47413">
    <property type="entry name" value="lambda repressor-like DNA-binding domains"/>
    <property type="match status" value="1"/>
</dbReference>
<dbReference type="PROSITE" id="PS00027">
    <property type="entry name" value="HOMEOBOX_1"/>
    <property type="match status" value="1"/>
</dbReference>
<dbReference type="PROSITE" id="PS50071">
    <property type="entry name" value="HOMEOBOX_2"/>
    <property type="match status" value="1"/>
</dbReference>
<dbReference type="PROSITE" id="PS00035">
    <property type="entry name" value="POU_1"/>
    <property type="match status" value="1"/>
</dbReference>
<dbReference type="PROSITE" id="PS00465">
    <property type="entry name" value="POU_2"/>
    <property type="match status" value="1"/>
</dbReference>
<dbReference type="PROSITE" id="PS51179">
    <property type="entry name" value="POU_3"/>
    <property type="match status" value="1"/>
</dbReference>
<feature type="chain" id="PRO_0000100751" description="POU domain, class 5, transcription factor 1">
    <location>
        <begin position="1"/>
        <end position="360"/>
    </location>
</feature>
<feature type="domain" description="POU-specific" evidence="4">
    <location>
        <begin position="138"/>
        <end position="212"/>
    </location>
</feature>
<feature type="DNA-binding region" description="Homeobox" evidence="3">
    <location>
        <begin position="230"/>
        <end position="289"/>
    </location>
</feature>
<feature type="region of interest" description="Disordered" evidence="5">
    <location>
        <begin position="1"/>
        <end position="50"/>
    </location>
</feature>
<feature type="region of interest" description="Disordered" evidence="5">
    <location>
        <begin position="87"/>
        <end position="118"/>
    </location>
</feature>
<feature type="region of interest" description="DNA-binding" evidence="1">
    <location>
        <begin position="180"/>
        <end position="186"/>
    </location>
</feature>
<feature type="region of interest" description="DNA-binding" evidence="1">
    <location>
        <begin position="193"/>
        <end position="196"/>
    </location>
</feature>
<feature type="region of interest" description="Disordered" evidence="5">
    <location>
        <begin position="287"/>
        <end position="316"/>
    </location>
</feature>
<feature type="short sequence motif" description="9aaTAD" evidence="2">
    <location>
        <begin position="4"/>
        <end position="12"/>
    </location>
</feature>
<feature type="compositionally biased region" description="Gly residues" evidence="5">
    <location>
        <begin position="41"/>
        <end position="50"/>
    </location>
</feature>
<feature type="compositionally biased region" description="Low complexity" evidence="5">
    <location>
        <begin position="302"/>
        <end position="313"/>
    </location>
</feature>
<feature type="binding site" evidence="1">
    <location>
        <position position="157"/>
    </location>
    <ligand>
        <name>DNA</name>
        <dbReference type="ChEBI" id="CHEBI:16991"/>
    </ligand>
</feature>
<feature type="binding site" evidence="1">
    <location>
        <position position="164"/>
    </location>
    <ligand>
        <name>DNA</name>
        <dbReference type="ChEBI" id="CHEBI:16991"/>
    </ligand>
</feature>
<feature type="modified residue" description="Phosphoserine; by MAPK" evidence="2">
    <location>
        <position position="111"/>
    </location>
</feature>
<feature type="modified residue" description="Phosphothreonine" evidence="2">
    <location>
        <position position="235"/>
    </location>
</feature>
<feature type="modified residue" description="Phosphoserine" evidence="2">
    <location>
        <position position="236"/>
    </location>
</feature>
<feature type="modified residue" description="Phosphoserine" evidence="2">
    <location>
        <position position="289"/>
    </location>
</feature>
<feature type="modified residue" description="Phosphoserine" evidence="2">
    <location>
        <position position="290"/>
    </location>
</feature>
<feature type="modified residue" description="Phosphoserine" evidence="1">
    <location>
        <position position="355"/>
    </location>
</feature>
<feature type="cross-link" description="Glycyl lysine isopeptide (Lys-Gly) (interchain with G-Cter in SUMO)" evidence="1">
    <location>
        <position position="123"/>
    </location>
</feature>
<accession>Q9TSV5</accession>
<evidence type="ECO:0000250" key="1">
    <source>
        <dbReference type="UniProtKB" id="P20263"/>
    </source>
</evidence>
<evidence type="ECO:0000250" key="2">
    <source>
        <dbReference type="UniProtKB" id="Q01860"/>
    </source>
</evidence>
<evidence type="ECO:0000255" key="3">
    <source>
        <dbReference type="PROSITE-ProRule" id="PRU00108"/>
    </source>
</evidence>
<evidence type="ECO:0000255" key="4">
    <source>
        <dbReference type="PROSITE-ProRule" id="PRU00530"/>
    </source>
</evidence>
<evidence type="ECO:0000256" key="5">
    <source>
        <dbReference type="SAM" id="MobiDB-lite"/>
    </source>
</evidence>
<evidence type="ECO:0000269" key="6">
    <source>
    </source>
</evidence>
<evidence type="ECO:0000305" key="7"/>
<protein>
    <recommendedName>
        <fullName>POU domain, class 5, transcription factor 1</fullName>
    </recommendedName>
    <alternativeName>
        <fullName>Octamer-binding protein 3</fullName>
        <shortName>Oct-3</shortName>
    </alternativeName>
    <alternativeName>
        <fullName>Octamer-binding protein 4</fullName>
        <shortName>Oct-4</shortName>
    </alternativeName>
    <alternativeName>
        <fullName>Octamer-binding transcription factor 3</fullName>
        <shortName>OTF-3</shortName>
    </alternativeName>
</protein>
<organism>
    <name type="scientific">Sus scrofa</name>
    <name type="common">Pig</name>
    <dbReference type="NCBI Taxonomy" id="9823"/>
    <lineage>
        <taxon>Eukaryota</taxon>
        <taxon>Metazoa</taxon>
        <taxon>Chordata</taxon>
        <taxon>Craniata</taxon>
        <taxon>Vertebrata</taxon>
        <taxon>Euteleostomi</taxon>
        <taxon>Mammalia</taxon>
        <taxon>Eutheria</taxon>
        <taxon>Laurasiatheria</taxon>
        <taxon>Artiodactyla</taxon>
        <taxon>Suina</taxon>
        <taxon>Suidae</taxon>
        <taxon>Sus</taxon>
    </lineage>
</organism>